<feature type="chain" id="PRO_0000257397" description="tRNA (guanine-N(1)-)-methyltransferase">
    <location>
        <begin position="1"/>
        <end position="264"/>
    </location>
</feature>
<feature type="binding site" evidence="1">
    <location>
        <position position="125"/>
    </location>
    <ligand>
        <name>S-adenosyl-L-methionine</name>
        <dbReference type="ChEBI" id="CHEBI:59789"/>
    </ligand>
</feature>
<feature type="binding site" evidence="1">
    <location>
        <begin position="145"/>
        <end position="150"/>
    </location>
    <ligand>
        <name>S-adenosyl-L-methionine</name>
        <dbReference type="ChEBI" id="CHEBI:59789"/>
    </ligand>
</feature>
<sequence length="264" mass="29346">MNQVTESAVQFDVVSLFPEMFRALTDWGITSRAVKQGRFGLRTWNPRDFTTDNYRTVDDRPYGGGPGMVMLARPLEAAIDAAKAAQAEQGIASTRVVMMSPQGAPLTHDRAVRMAQEPGVVVLCGRYEAIDQRLLDRCVDEEISLGDFVLSGGELPAMAMMDAVVRLLPGVLNDSLSAVQDSFADGLLDCPHYTRPEEYDGVRVPDVLLGGHHAEIERWRRQEALRNTLRKRPDLIVRARREKLLSRADEAWLANLAREAKDAS</sequence>
<organism>
    <name type="scientific">Burkholderia lata (strain ATCC 17760 / DSM 23089 / LMG 22485 / NCIMB 9086 / R18194 / 383)</name>
    <dbReference type="NCBI Taxonomy" id="482957"/>
    <lineage>
        <taxon>Bacteria</taxon>
        <taxon>Pseudomonadati</taxon>
        <taxon>Pseudomonadota</taxon>
        <taxon>Betaproteobacteria</taxon>
        <taxon>Burkholderiales</taxon>
        <taxon>Burkholderiaceae</taxon>
        <taxon>Burkholderia</taxon>
        <taxon>Burkholderia cepacia complex</taxon>
    </lineage>
</organism>
<reference key="1">
    <citation type="submission" date="2005-10" db="EMBL/GenBank/DDBJ databases">
        <title>Complete sequence of chromosome 1 of Burkholderia sp. 383.</title>
        <authorList>
            <consortium name="US DOE Joint Genome Institute"/>
            <person name="Copeland A."/>
            <person name="Lucas S."/>
            <person name="Lapidus A."/>
            <person name="Barry K."/>
            <person name="Detter J.C."/>
            <person name="Glavina T."/>
            <person name="Hammon N."/>
            <person name="Israni S."/>
            <person name="Pitluck S."/>
            <person name="Chain P."/>
            <person name="Malfatti S."/>
            <person name="Shin M."/>
            <person name="Vergez L."/>
            <person name="Schmutz J."/>
            <person name="Larimer F."/>
            <person name="Land M."/>
            <person name="Kyrpides N."/>
            <person name="Lykidis A."/>
            <person name="Richardson P."/>
        </authorList>
    </citation>
    <scope>NUCLEOTIDE SEQUENCE [LARGE SCALE GENOMIC DNA]</scope>
    <source>
        <strain>ATCC 17760 / DSM 23089 / LMG 22485 / NCIMB 9086 / R18194 / 383</strain>
    </source>
</reference>
<protein>
    <recommendedName>
        <fullName evidence="1">tRNA (guanine-N(1)-)-methyltransferase</fullName>
        <ecNumber evidence="1">2.1.1.228</ecNumber>
    </recommendedName>
    <alternativeName>
        <fullName evidence="1">M1G-methyltransferase</fullName>
    </alternativeName>
    <alternativeName>
        <fullName evidence="1">tRNA [GM37] methyltransferase</fullName>
    </alternativeName>
</protein>
<keyword id="KW-0963">Cytoplasm</keyword>
<keyword id="KW-0489">Methyltransferase</keyword>
<keyword id="KW-0949">S-adenosyl-L-methionine</keyword>
<keyword id="KW-0808">Transferase</keyword>
<keyword id="KW-0819">tRNA processing</keyword>
<evidence type="ECO:0000255" key="1">
    <source>
        <dbReference type="HAMAP-Rule" id="MF_00605"/>
    </source>
</evidence>
<proteinExistence type="inferred from homology"/>
<dbReference type="EC" id="2.1.1.228" evidence="1"/>
<dbReference type="EMBL" id="CP000151">
    <property type="protein sequence ID" value="ABB07782.1"/>
    <property type="molecule type" value="Genomic_DNA"/>
</dbReference>
<dbReference type="RefSeq" id="WP_011351358.1">
    <property type="nucleotide sequence ID" value="NC_007510.1"/>
</dbReference>
<dbReference type="SMR" id="Q39ID4"/>
<dbReference type="GeneID" id="45094084"/>
<dbReference type="KEGG" id="bur:Bcep18194_A4185"/>
<dbReference type="PATRIC" id="fig|482957.22.peg.1072"/>
<dbReference type="HOGENOM" id="CLU_047363_0_2_4"/>
<dbReference type="Proteomes" id="UP000002705">
    <property type="component" value="Chromosome 1"/>
</dbReference>
<dbReference type="GO" id="GO:0005829">
    <property type="term" value="C:cytosol"/>
    <property type="evidence" value="ECO:0007669"/>
    <property type="project" value="TreeGrafter"/>
</dbReference>
<dbReference type="GO" id="GO:0052906">
    <property type="term" value="F:tRNA (guanine(37)-N1)-methyltransferase activity"/>
    <property type="evidence" value="ECO:0007669"/>
    <property type="project" value="UniProtKB-UniRule"/>
</dbReference>
<dbReference type="GO" id="GO:0002939">
    <property type="term" value="P:tRNA N1-guanine methylation"/>
    <property type="evidence" value="ECO:0007669"/>
    <property type="project" value="TreeGrafter"/>
</dbReference>
<dbReference type="CDD" id="cd18080">
    <property type="entry name" value="TrmD-like"/>
    <property type="match status" value="1"/>
</dbReference>
<dbReference type="FunFam" id="1.10.1270.20:FF:000001">
    <property type="entry name" value="tRNA (guanine-N(1)-)-methyltransferase"/>
    <property type="match status" value="1"/>
</dbReference>
<dbReference type="FunFam" id="3.40.1280.10:FF:000001">
    <property type="entry name" value="tRNA (guanine-N(1)-)-methyltransferase"/>
    <property type="match status" value="1"/>
</dbReference>
<dbReference type="Gene3D" id="3.40.1280.10">
    <property type="match status" value="1"/>
</dbReference>
<dbReference type="Gene3D" id="1.10.1270.20">
    <property type="entry name" value="tRNA(m1g37)methyltransferase, domain 2"/>
    <property type="match status" value="1"/>
</dbReference>
<dbReference type="HAMAP" id="MF_00605">
    <property type="entry name" value="TrmD"/>
    <property type="match status" value="1"/>
</dbReference>
<dbReference type="InterPro" id="IPR029028">
    <property type="entry name" value="Alpha/beta_knot_MTases"/>
</dbReference>
<dbReference type="InterPro" id="IPR023148">
    <property type="entry name" value="tRNA_m1G_MeTrfase_C_sf"/>
</dbReference>
<dbReference type="InterPro" id="IPR002649">
    <property type="entry name" value="tRNA_m1G_MeTrfase_TrmD"/>
</dbReference>
<dbReference type="InterPro" id="IPR029026">
    <property type="entry name" value="tRNA_m1G_MTases_N"/>
</dbReference>
<dbReference type="InterPro" id="IPR016009">
    <property type="entry name" value="tRNA_MeTrfase_TRMD/TRM10"/>
</dbReference>
<dbReference type="NCBIfam" id="NF000648">
    <property type="entry name" value="PRK00026.1"/>
    <property type="match status" value="1"/>
</dbReference>
<dbReference type="NCBIfam" id="TIGR00088">
    <property type="entry name" value="trmD"/>
    <property type="match status" value="1"/>
</dbReference>
<dbReference type="PANTHER" id="PTHR46417">
    <property type="entry name" value="TRNA (GUANINE-N(1)-)-METHYLTRANSFERASE"/>
    <property type="match status" value="1"/>
</dbReference>
<dbReference type="PANTHER" id="PTHR46417:SF1">
    <property type="entry name" value="TRNA (GUANINE-N(1)-)-METHYLTRANSFERASE"/>
    <property type="match status" value="1"/>
</dbReference>
<dbReference type="Pfam" id="PF01746">
    <property type="entry name" value="tRNA_m1G_MT"/>
    <property type="match status" value="1"/>
</dbReference>
<dbReference type="PIRSF" id="PIRSF000386">
    <property type="entry name" value="tRNA_mtase"/>
    <property type="match status" value="1"/>
</dbReference>
<dbReference type="SUPFAM" id="SSF75217">
    <property type="entry name" value="alpha/beta knot"/>
    <property type="match status" value="1"/>
</dbReference>
<gene>
    <name evidence="1" type="primary">trmD</name>
    <name type="ordered locus">Bcep18194_A4185</name>
</gene>
<name>TRMD_BURL3</name>
<accession>Q39ID4</accession>
<comment type="function">
    <text evidence="1">Specifically methylates guanosine-37 in various tRNAs.</text>
</comment>
<comment type="catalytic activity">
    <reaction evidence="1">
        <text>guanosine(37) in tRNA + S-adenosyl-L-methionine = N(1)-methylguanosine(37) in tRNA + S-adenosyl-L-homocysteine + H(+)</text>
        <dbReference type="Rhea" id="RHEA:36899"/>
        <dbReference type="Rhea" id="RHEA-COMP:10145"/>
        <dbReference type="Rhea" id="RHEA-COMP:10147"/>
        <dbReference type="ChEBI" id="CHEBI:15378"/>
        <dbReference type="ChEBI" id="CHEBI:57856"/>
        <dbReference type="ChEBI" id="CHEBI:59789"/>
        <dbReference type="ChEBI" id="CHEBI:73542"/>
        <dbReference type="ChEBI" id="CHEBI:74269"/>
        <dbReference type="EC" id="2.1.1.228"/>
    </reaction>
</comment>
<comment type="subunit">
    <text evidence="1">Homodimer.</text>
</comment>
<comment type="subcellular location">
    <subcellularLocation>
        <location evidence="1">Cytoplasm</location>
    </subcellularLocation>
</comment>
<comment type="similarity">
    <text evidence="1">Belongs to the RNA methyltransferase TrmD family.</text>
</comment>